<reference key="1">
    <citation type="journal article" date="1998" name="Nature">
        <title>Deciphering the biology of Mycobacterium tuberculosis from the complete genome sequence.</title>
        <authorList>
            <person name="Cole S.T."/>
            <person name="Brosch R."/>
            <person name="Parkhill J."/>
            <person name="Garnier T."/>
            <person name="Churcher C.M."/>
            <person name="Harris D.E."/>
            <person name="Gordon S.V."/>
            <person name="Eiglmeier K."/>
            <person name="Gas S."/>
            <person name="Barry C.E. III"/>
            <person name="Tekaia F."/>
            <person name="Badcock K."/>
            <person name="Basham D."/>
            <person name="Brown D."/>
            <person name="Chillingworth T."/>
            <person name="Connor R."/>
            <person name="Davies R.M."/>
            <person name="Devlin K."/>
            <person name="Feltwell T."/>
            <person name="Gentles S."/>
            <person name="Hamlin N."/>
            <person name="Holroyd S."/>
            <person name="Hornsby T."/>
            <person name="Jagels K."/>
            <person name="Krogh A."/>
            <person name="McLean J."/>
            <person name="Moule S."/>
            <person name="Murphy L.D."/>
            <person name="Oliver S."/>
            <person name="Osborne J."/>
            <person name="Quail M.A."/>
            <person name="Rajandream M.A."/>
            <person name="Rogers J."/>
            <person name="Rutter S."/>
            <person name="Seeger K."/>
            <person name="Skelton S."/>
            <person name="Squares S."/>
            <person name="Squares R."/>
            <person name="Sulston J.E."/>
            <person name="Taylor K."/>
            <person name="Whitehead S."/>
            <person name="Barrell B.G."/>
        </authorList>
    </citation>
    <scope>NUCLEOTIDE SEQUENCE [LARGE SCALE GENOMIC DNA]</scope>
    <source>
        <strain>ATCC 25618 / H37Rv</strain>
    </source>
</reference>
<reference key="2">
    <citation type="journal article" date="2005" name="Nucleic Acids Res.">
        <title>Toxin-antitoxin loci are highly abundant in free-living but lost from host-associated prokaryotes.</title>
        <authorList>
            <person name="Pandey D.P."/>
            <person name="Gerdes K."/>
        </authorList>
    </citation>
    <scope>POSSIBLE FUNCTION</scope>
    <source>
        <strain>ATCC 25618 / H37Rv</strain>
    </source>
</reference>
<feature type="chain" id="PRO_0000408054" description="Putative antitoxin VapB6">
    <location>
        <begin position="1"/>
        <end position="51"/>
    </location>
</feature>
<protein>
    <recommendedName>
        <fullName>Putative antitoxin VapB6</fullName>
    </recommendedName>
</protein>
<accession>P9WJ57</accession>
<accession>L0T4C5</accession>
<accession>O06782</accession>
<accession>Q7D9H1</accession>
<gene>
    <name type="primary">vapB6</name>
    <name type="ordered locus">Rv0657c</name>
</gene>
<evidence type="ECO:0000305" key="1">
    <source>
    </source>
</evidence>
<proteinExistence type="predicted"/>
<name>VAPB6_MYCTU</name>
<sequence length="51" mass="5905">MSVTQIDLDDEALADVMRIAAVHTKKEAVNLAMRDYVERFRRIEALARSRE</sequence>
<comment type="function">
    <text evidence="1">Antitoxin component of a possible type II toxin-antitoxin (TA) system. The cognate toxin is VapC6.</text>
</comment>
<keyword id="KW-1185">Reference proteome</keyword>
<keyword id="KW-1277">Toxin-antitoxin system</keyword>
<organism>
    <name type="scientific">Mycobacterium tuberculosis (strain ATCC 25618 / H37Rv)</name>
    <dbReference type="NCBI Taxonomy" id="83332"/>
    <lineage>
        <taxon>Bacteria</taxon>
        <taxon>Bacillati</taxon>
        <taxon>Actinomycetota</taxon>
        <taxon>Actinomycetes</taxon>
        <taxon>Mycobacteriales</taxon>
        <taxon>Mycobacteriaceae</taxon>
        <taxon>Mycobacterium</taxon>
        <taxon>Mycobacterium tuberculosis complex</taxon>
    </lineage>
</organism>
<dbReference type="EMBL" id="AL123456">
    <property type="protein sequence ID" value="CCP43400.1"/>
    <property type="molecule type" value="Genomic_DNA"/>
</dbReference>
<dbReference type="PIR" id="D70534">
    <property type="entry name" value="D70534"/>
</dbReference>
<dbReference type="RefSeq" id="NP_215171.1">
    <property type="nucleotide sequence ID" value="NC_000962.3"/>
</dbReference>
<dbReference type="RefSeq" id="WP_003403368.1">
    <property type="nucleotide sequence ID" value="NZ_NVQJ01000007.1"/>
</dbReference>
<dbReference type="SMR" id="P9WJ57"/>
<dbReference type="STRING" id="83332.Rv0657c"/>
<dbReference type="PaxDb" id="83332-Rv0657c"/>
<dbReference type="DNASU" id="888077"/>
<dbReference type="GeneID" id="888077"/>
<dbReference type="KEGG" id="mtu:Rv0657c"/>
<dbReference type="KEGG" id="mtv:RVBD_0657c"/>
<dbReference type="TubercuList" id="Rv0657c"/>
<dbReference type="eggNOG" id="COG5450">
    <property type="taxonomic scope" value="Bacteria"/>
</dbReference>
<dbReference type="InParanoid" id="P9WJ57"/>
<dbReference type="OrthoDB" id="4563074at2"/>
<dbReference type="Proteomes" id="UP000001584">
    <property type="component" value="Chromosome"/>
</dbReference>
<dbReference type="InterPro" id="IPR019239">
    <property type="entry name" value="VapB_antitoxin"/>
</dbReference>
<dbReference type="Pfam" id="PF09957">
    <property type="entry name" value="VapB_antitoxin"/>
    <property type="match status" value="1"/>
</dbReference>